<accession>Q250P8</accession>
<reference key="1">
    <citation type="journal article" date="2006" name="J. Bacteriol.">
        <title>Complete genome sequence of the dehalorespiring bacterium Desulfitobacterium hafniense Y51 and comparison with Dehalococcoides ethenogenes 195.</title>
        <authorList>
            <person name="Nonaka H."/>
            <person name="Keresztes G."/>
            <person name="Shinoda Y."/>
            <person name="Ikenaga Y."/>
            <person name="Abe M."/>
            <person name="Naito K."/>
            <person name="Inatomi K."/>
            <person name="Furukawa K."/>
            <person name="Inui M."/>
            <person name="Yukawa H."/>
        </authorList>
    </citation>
    <scope>NUCLEOTIDE SEQUENCE [LARGE SCALE GENOMIC DNA]</scope>
    <source>
        <strain>Y51</strain>
    </source>
</reference>
<keyword id="KW-0488">Methylation</keyword>
<keyword id="KW-1185">Reference proteome</keyword>
<keyword id="KW-0687">Ribonucleoprotein</keyword>
<keyword id="KW-0689">Ribosomal protein</keyword>
<keyword id="KW-0694">RNA-binding</keyword>
<keyword id="KW-0699">rRNA-binding</keyword>
<gene>
    <name evidence="1" type="primary">rplK</name>
    <name type="ordered locus">DSY0455</name>
</gene>
<organism>
    <name type="scientific">Desulfitobacterium hafniense (strain Y51)</name>
    <dbReference type="NCBI Taxonomy" id="138119"/>
    <lineage>
        <taxon>Bacteria</taxon>
        <taxon>Bacillati</taxon>
        <taxon>Bacillota</taxon>
        <taxon>Clostridia</taxon>
        <taxon>Eubacteriales</taxon>
        <taxon>Desulfitobacteriaceae</taxon>
        <taxon>Desulfitobacterium</taxon>
    </lineage>
</organism>
<protein>
    <recommendedName>
        <fullName evidence="1">Large ribosomal subunit protein uL11</fullName>
    </recommendedName>
    <alternativeName>
        <fullName evidence="2">50S ribosomal protein L11</fullName>
    </alternativeName>
</protein>
<proteinExistence type="inferred from homology"/>
<sequence length="142" mass="15097">MAKKVVGLVKLAINAGKANPAPPVGPALGQHGVNIMAFCKEYNERTKDQAGLIIPVEITVYEDRSFTFITKTPPASILLKKAANINSGSSEPNRKKVAQVSKTKVREIAETKMKDLNAASVEAAMSMVEGTARSMGITIVEG</sequence>
<name>RL11_DESHY</name>
<comment type="function">
    <text evidence="1">Forms part of the ribosomal stalk which helps the ribosome interact with GTP-bound translation factors.</text>
</comment>
<comment type="subunit">
    <text evidence="1">Part of the ribosomal stalk of the 50S ribosomal subunit. Interacts with L10 and the large rRNA to form the base of the stalk. L10 forms an elongated spine to which L12 dimers bind in a sequential fashion forming a multimeric L10(L12)X complex.</text>
</comment>
<comment type="PTM">
    <text evidence="1">One or more lysine residues are methylated.</text>
</comment>
<comment type="similarity">
    <text evidence="1">Belongs to the universal ribosomal protein uL11 family.</text>
</comment>
<dbReference type="EMBL" id="AP008230">
    <property type="protein sequence ID" value="BAE82244.1"/>
    <property type="molecule type" value="Genomic_DNA"/>
</dbReference>
<dbReference type="RefSeq" id="WP_005810197.1">
    <property type="nucleotide sequence ID" value="NC_007907.1"/>
</dbReference>
<dbReference type="SMR" id="Q250P8"/>
<dbReference type="STRING" id="138119.DSY0455"/>
<dbReference type="KEGG" id="dsy:DSY0455"/>
<dbReference type="eggNOG" id="COG0080">
    <property type="taxonomic scope" value="Bacteria"/>
</dbReference>
<dbReference type="HOGENOM" id="CLU_074237_2_1_9"/>
<dbReference type="Proteomes" id="UP000001946">
    <property type="component" value="Chromosome"/>
</dbReference>
<dbReference type="GO" id="GO:0022625">
    <property type="term" value="C:cytosolic large ribosomal subunit"/>
    <property type="evidence" value="ECO:0007669"/>
    <property type="project" value="TreeGrafter"/>
</dbReference>
<dbReference type="GO" id="GO:0070180">
    <property type="term" value="F:large ribosomal subunit rRNA binding"/>
    <property type="evidence" value="ECO:0007669"/>
    <property type="project" value="UniProtKB-UniRule"/>
</dbReference>
<dbReference type="GO" id="GO:0003735">
    <property type="term" value="F:structural constituent of ribosome"/>
    <property type="evidence" value="ECO:0007669"/>
    <property type="project" value="InterPro"/>
</dbReference>
<dbReference type="GO" id="GO:0006412">
    <property type="term" value="P:translation"/>
    <property type="evidence" value="ECO:0007669"/>
    <property type="project" value="UniProtKB-UniRule"/>
</dbReference>
<dbReference type="CDD" id="cd00349">
    <property type="entry name" value="Ribosomal_L11"/>
    <property type="match status" value="1"/>
</dbReference>
<dbReference type="FunFam" id="1.10.10.250:FF:000001">
    <property type="entry name" value="50S ribosomal protein L11"/>
    <property type="match status" value="1"/>
</dbReference>
<dbReference type="FunFam" id="3.30.1550.10:FF:000001">
    <property type="entry name" value="50S ribosomal protein L11"/>
    <property type="match status" value="1"/>
</dbReference>
<dbReference type="Gene3D" id="1.10.10.250">
    <property type="entry name" value="Ribosomal protein L11, C-terminal domain"/>
    <property type="match status" value="1"/>
</dbReference>
<dbReference type="Gene3D" id="3.30.1550.10">
    <property type="entry name" value="Ribosomal protein L11/L12, N-terminal domain"/>
    <property type="match status" value="1"/>
</dbReference>
<dbReference type="HAMAP" id="MF_00736">
    <property type="entry name" value="Ribosomal_uL11"/>
    <property type="match status" value="1"/>
</dbReference>
<dbReference type="InterPro" id="IPR000911">
    <property type="entry name" value="Ribosomal_uL11"/>
</dbReference>
<dbReference type="InterPro" id="IPR006519">
    <property type="entry name" value="Ribosomal_uL11_bac-typ"/>
</dbReference>
<dbReference type="InterPro" id="IPR020783">
    <property type="entry name" value="Ribosomal_uL11_C"/>
</dbReference>
<dbReference type="InterPro" id="IPR036769">
    <property type="entry name" value="Ribosomal_uL11_C_sf"/>
</dbReference>
<dbReference type="InterPro" id="IPR020784">
    <property type="entry name" value="Ribosomal_uL11_N"/>
</dbReference>
<dbReference type="InterPro" id="IPR036796">
    <property type="entry name" value="Ribosomal_uL11_N_sf"/>
</dbReference>
<dbReference type="NCBIfam" id="TIGR01632">
    <property type="entry name" value="L11_bact"/>
    <property type="match status" value="1"/>
</dbReference>
<dbReference type="PANTHER" id="PTHR11661">
    <property type="entry name" value="60S RIBOSOMAL PROTEIN L12"/>
    <property type="match status" value="1"/>
</dbReference>
<dbReference type="PANTHER" id="PTHR11661:SF1">
    <property type="entry name" value="LARGE RIBOSOMAL SUBUNIT PROTEIN UL11M"/>
    <property type="match status" value="1"/>
</dbReference>
<dbReference type="Pfam" id="PF00298">
    <property type="entry name" value="Ribosomal_L11"/>
    <property type="match status" value="1"/>
</dbReference>
<dbReference type="Pfam" id="PF03946">
    <property type="entry name" value="Ribosomal_L11_N"/>
    <property type="match status" value="1"/>
</dbReference>
<dbReference type="SMART" id="SM00649">
    <property type="entry name" value="RL11"/>
    <property type="match status" value="1"/>
</dbReference>
<dbReference type="SUPFAM" id="SSF54747">
    <property type="entry name" value="Ribosomal L11/L12e N-terminal domain"/>
    <property type="match status" value="1"/>
</dbReference>
<dbReference type="SUPFAM" id="SSF46906">
    <property type="entry name" value="Ribosomal protein L11, C-terminal domain"/>
    <property type="match status" value="1"/>
</dbReference>
<evidence type="ECO:0000255" key="1">
    <source>
        <dbReference type="HAMAP-Rule" id="MF_00736"/>
    </source>
</evidence>
<evidence type="ECO:0000305" key="2"/>
<feature type="chain" id="PRO_0000258150" description="Large ribosomal subunit protein uL11">
    <location>
        <begin position="1"/>
        <end position="142"/>
    </location>
</feature>